<gene>
    <name evidence="1" type="primary">rpsT</name>
    <name type="ordered locus">SPA0044</name>
</gene>
<proteinExistence type="inferred from homology"/>
<dbReference type="EMBL" id="CP000026">
    <property type="protein sequence ID" value="AAV76079.1"/>
    <property type="molecule type" value="Genomic_DNA"/>
</dbReference>
<dbReference type="RefSeq" id="WP_001518655.1">
    <property type="nucleotide sequence ID" value="NC_006511.1"/>
</dbReference>
<dbReference type="SMR" id="Q5PDM2"/>
<dbReference type="GeneID" id="93310349"/>
<dbReference type="KEGG" id="spt:SPA0044"/>
<dbReference type="HOGENOM" id="CLU_160655_4_0_6"/>
<dbReference type="Proteomes" id="UP000008185">
    <property type="component" value="Chromosome"/>
</dbReference>
<dbReference type="GO" id="GO:0005829">
    <property type="term" value="C:cytosol"/>
    <property type="evidence" value="ECO:0007669"/>
    <property type="project" value="TreeGrafter"/>
</dbReference>
<dbReference type="GO" id="GO:0015935">
    <property type="term" value="C:small ribosomal subunit"/>
    <property type="evidence" value="ECO:0007669"/>
    <property type="project" value="TreeGrafter"/>
</dbReference>
<dbReference type="GO" id="GO:0070181">
    <property type="term" value="F:small ribosomal subunit rRNA binding"/>
    <property type="evidence" value="ECO:0007669"/>
    <property type="project" value="TreeGrafter"/>
</dbReference>
<dbReference type="GO" id="GO:0003735">
    <property type="term" value="F:structural constituent of ribosome"/>
    <property type="evidence" value="ECO:0007669"/>
    <property type="project" value="InterPro"/>
</dbReference>
<dbReference type="GO" id="GO:0006412">
    <property type="term" value="P:translation"/>
    <property type="evidence" value="ECO:0007669"/>
    <property type="project" value="UniProtKB-UniRule"/>
</dbReference>
<dbReference type="FunFam" id="1.20.58.110:FF:000001">
    <property type="entry name" value="30S ribosomal protein S20"/>
    <property type="match status" value="1"/>
</dbReference>
<dbReference type="Gene3D" id="1.20.58.110">
    <property type="entry name" value="Ribosomal protein S20"/>
    <property type="match status" value="1"/>
</dbReference>
<dbReference type="HAMAP" id="MF_00500">
    <property type="entry name" value="Ribosomal_bS20"/>
    <property type="match status" value="1"/>
</dbReference>
<dbReference type="InterPro" id="IPR002583">
    <property type="entry name" value="Ribosomal_bS20"/>
</dbReference>
<dbReference type="InterPro" id="IPR036510">
    <property type="entry name" value="Ribosomal_bS20_sf"/>
</dbReference>
<dbReference type="NCBIfam" id="TIGR00029">
    <property type="entry name" value="S20"/>
    <property type="match status" value="1"/>
</dbReference>
<dbReference type="PANTHER" id="PTHR33398">
    <property type="entry name" value="30S RIBOSOMAL PROTEIN S20"/>
    <property type="match status" value="1"/>
</dbReference>
<dbReference type="PANTHER" id="PTHR33398:SF1">
    <property type="entry name" value="SMALL RIBOSOMAL SUBUNIT PROTEIN BS20C"/>
    <property type="match status" value="1"/>
</dbReference>
<dbReference type="Pfam" id="PF01649">
    <property type="entry name" value="Ribosomal_S20p"/>
    <property type="match status" value="1"/>
</dbReference>
<dbReference type="SUPFAM" id="SSF46992">
    <property type="entry name" value="Ribosomal protein S20"/>
    <property type="match status" value="1"/>
</dbReference>
<name>RS20_SALPA</name>
<organism>
    <name type="scientific">Salmonella paratyphi A (strain ATCC 9150 / SARB42)</name>
    <dbReference type="NCBI Taxonomy" id="295319"/>
    <lineage>
        <taxon>Bacteria</taxon>
        <taxon>Pseudomonadati</taxon>
        <taxon>Pseudomonadota</taxon>
        <taxon>Gammaproteobacteria</taxon>
        <taxon>Enterobacterales</taxon>
        <taxon>Enterobacteriaceae</taxon>
        <taxon>Salmonella</taxon>
    </lineage>
</organism>
<protein>
    <recommendedName>
        <fullName evidence="1">Small ribosomal subunit protein bS20</fullName>
    </recommendedName>
    <alternativeName>
        <fullName evidence="3">30S ribosomal protein S20</fullName>
    </alternativeName>
</protein>
<keyword id="KW-0687">Ribonucleoprotein</keyword>
<keyword id="KW-0689">Ribosomal protein</keyword>
<keyword id="KW-0694">RNA-binding</keyword>
<keyword id="KW-0699">rRNA-binding</keyword>
<evidence type="ECO:0000255" key="1">
    <source>
        <dbReference type="HAMAP-Rule" id="MF_00500"/>
    </source>
</evidence>
<evidence type="ECO:0000256" key="2">
    <source>
        <dbReference type="SAM" id="MobiDB-lite"/>
    </source>
</evidence>
<evidence type="ECO:0000305" key="3"/>
<sequence>MANIKSAKKRAVQSEKARKHNASRRSMMRTFIKKVYAAIEAGDKAAALKAFNEMQPIVDRQAAKGLIHKNKAARHKANLTAQINKLA</sequence>
<comment type="function">
    <text evidence="1">Binds directly to 16S ribosomal RNA.</text>
</comment>
<comment type="similarity">
    <text evidence="1">Belongs to the bacterial ribosomal protein bS20 family.</text>
</comment>
<accession>Q5PDM2</accession>
<feature type="chain" id="PRO_0000168025" description="Small ribosomal subunit protein bS20">
    <location>
        <begin position="1"/>
        <end position="87"/>
    </location>
</feature>
<feature type="region of interest" description="Disordered" evidence="2">
    <location>
        <begin position="1"/>
        <end position="26"/>
    </location>
</feature>
<reference key="1">
    <citation type="journal article" date="2004" name="Nat. Genet.">
        <title>Comparison of genome degradation in Paratyphi A and Typhi, human-restricted serovars of Salmonella enterica that cause typhoid.</title>
        <authorList>
            <person name="McClelland M."/>
            <person name="Sanderson K.E."/>
            <person name="Clifton S.W."/>
            <person name="Latreille P."/>
            <person name="Porwollik S."/>
            <person name="Sabo A."/>
            <person name="Meyer R."/>
            <person name="Bieri T."/>
            <person name="Ozersky P."/>
            <person name="McLellan M."/>
            <person name="Harkins C.R."/>
            <person name="Wang C."/>
            <person name="Nguyen C."/>
            <person name="Berghoff A."/>
            <person name="Elliott G."/>
            <person name="Kohlberg S."/>
            <person name="Strong C."/>
            <person name="Du F."/>
            <person name="Carter J."/>
            <person name="Kremizki C."/>
            <person name="Layman D."/>
            <person name="Leonard S."/>
            <person name="Sun H."/>
            <person name="Fulton L."/>
            <person name="Nash W."/>
            <person name="Miner T."/>
            <person name="Minx P."/>
            <person name="Delehaunty K."/>
            <person name="Fronick C."/>
            <person name="Magrini V."/>
            <person name="Nhan M."/>
            <person name="Warren W."/>
            <person name="Florea L."/>
            <person name="Spieth J."/>
            <person name="Wilson R.K."/>
        </authorList>
    </citation>
    <scope>NUCLEOTIDE SEQUENCE [LARGE SCALE GENOMIC DNA]</scope>
    <source>
        <strain>ATCC 9150 / SARB42</strain>
    </source>
</reference>